<protein>
    <recommendedName>
        <fullName evidence="1">Recombination protein RecR</fullName>
    </recommendedName>
</protein>
<sequence>MQTSPLLTQLMEALRCLPGVGPKSAQRMAFTLLQRDRSGGMRLAQALTRAMSEIGHCADCRTFTEQDVCNICSNPRRQENGQICVVESPADIYAIEQTGQFPGRYFVLMGHLSPLDGIGPDDIGLDRLEQRLASEKISELILATNPTVEGEATANYIAELCAEAGVEASRIAHGVPVGGELEMVDGTTLSHSLAGRHKIIF</sequence>
<evidence type="ECO:0000255" key="1">
    <source>
        <dbReference type="HAMAP-Rule" id="MF_00017"/>
    </source>
</evidence>
<comment type="function">
    <text evidence="1">May play a role in DNA repair. It seems to be involved in an RecBC-independent recombinational process of DNA repair. It may act with RecF and RecO.</text>
</comment>
<comment type="similarity">
    <text evidence="1">Belongs to the RecR family.</text>
</comment>
<feature type="chain" id="PRO_0000190378" description="Recombination protein RecR">
    <location>
        <begin position="1"/>
        <end position="201"/>
    </location>
</feature>
<feature type="domain" description="Toprim" evidence="1">
    <location>
        <begin position="81"/>
        <end position="176"/>
    </location>
</feature>
<feature type="zinc finger region" description="C4-type" evidence="1">
    <location>
        <begin position="57"/>
        <end position="72"/>
    </location>
</feature>
<name>RECR_SALCH</name>
<reference key="1">
    <citation type="journal article" date="2005" name="Nucleic Acids Res.">
        <title>The genome sequence of Salmonella enterica serovar Choleraesuis, a highly invasive and resistant zoonotic pathogen.</title>
        <authorList>
            <person name="Chiu C.-H."/>
            <person name="Tang P."/>
            <person name="Chu C."/>
            <person name="Hu S."/>
            <person name="Bao Q."/>
            <person name="Yu J."/>
            <person name="Chou Y.-Y."/>
            <person name="Wang H.-S."/>
            <person name="Lee Y.-S."/>
        </authorList>
    </citation>
    <scope>NUCLEOTIDE SEQUENCE [LARGE SCALE GENOMIC DNA]</scope>
    <source>
        <strain>SC-B67</strain>
    </source>
</reference>
<accession>Q57S78</accession>
<dbReference type="EMBL" id="AE017220">
    <property type="protein sequence ID" value="AAX64433.1"/>
    <property type="molecule type" value="Genomic_DNA"/>
</dbReference>
<dbReference type="RefSeq" id="WP_001539337.1">
    <property type="nucleotide sequence ID" value="NC_006905.1"/>
</dbReference>
<dbReference type="SMR" id="Q57S78"/>
<dbReference type="KEGG" id="sec:SCH_0527"/>
<dbReference type="HOGENOM" id="CLU_060739_1_2_6"/>
<dbReference type="Proteomes" id="UP000000538">
    <property type="component" value="Chromosome"/>
</dbReference>
<dbReference type="GO" id="GO:0003677">
    <property type="term" value="F:DNA binding"/>
    <property type="evidence" value="ECO:0007669"/>
    <property type="project" value="UniProtKB-UniRule"/>
</dbReference>
<dbReference type="GO" id="GO:0008270">
    <property type="term" value="F:zinc ion binding"/>
    <property type="evidence" value="ECO:0007669"/>
    <property type="project" value="UniProtKB-KW"/>
</dbReference>
<dbReference type="GO" id="GO:0006310">
    <property type="term" value="P:DNA recombination"/>
    <property type="evidence" value="ECO:0007669"/>
    <property type="project" value="UniProtKB-UniRule"/>
</dbReference>
<dbReference type="GO" id="GO:0006281">
    <property type="term" value="P:DNA repair"/>
    <property type="evidence" value="ECO:0007669"/>
    <property type="project" value="UniProtKB-UniRule"/>
</dbReference>
<dbReference type="CDD" id="cd01025">
    <property type="entry name" value="TOPRIM_recR"/>
    <property type="match status" value="1"/>
</dbReference>
<dbReference type="FunFam" id="1.10.8.420:FF:000001">
    <property type="entry name" value="Recombination protein RecR"/>
    <property type="match status" value="1"/>
</dbReference>
<dbReference type="FunFam" id="3.40.1360.10:FF:000001">
    <property type="entry name" value="Recombination protein RecR"/>
    <property type="match status" value="1"/>
</dbReference>
<dbReference type="Gene3D" id="3.40.1360.10">
    <property type="match status" value="1"/>
</dbReference>
<dbReference type="Gene3D" id="6.10.250.240">
    <property type="match status" value="1"/>
</dbReference>
<dbReference type="Gene3D" id="1.10.8.420">
    <property type="entry name" value="RecR Domain 1"/>
    <property type="match status" value="1"/>
</dbReference>
<dbReference type="HAMAP" id="MF_00017">
    <property type="entry name" value="RecR"/>
    <property type="match status" value="1"/>
</dbReference>
<dbReference type="InterPro" id="IPR000093">
    <property type="entry name" value="DNA_Rcmb_RecR"/>
</dbReference>
<dbReference type="InterPro" id="IPR023627">
    <property type="entry name" value="Rcmb_RecR"/>
</dbReference>
<dbReference type="InterPro" id="IPR015967">
    <property type="entry name" value="Rcmb_RecR_Znf"/>
</dbReference>
<dbReference type="InterPro" id="IPR006171">
    <property type="entry name" value="TOPRIM_dom"/>
</dbReference>
<dbReference type="InterPro" id="IPR034137">
    <property type="entry name" value="TOPRIM_RecR"/>
</dbReference>
<dbReference type="NCBIfam" id="TIGR00615">
    <property type="entry name" value="recR"/>
    <property type="match status" value="1"/>
</dbReference>
<dbReference type="PANTHER" id="PTHR30446">
    <property type="entry name" value="RECOMBINATION PROTEIN RECR"/>
    <property type="match status" value="1"/>
</dbReference>
<dbReference type="PANTHER" id="PTHR30446:SF0">
    <property type="entry name" value="RECOMBINATION PROTEIN RECR"/>
    <property type="match status" value="1"/>
</dbReference>
<dbReference type="Pfam" id="PF21175">
    <property type="entry name" value="RecR_C"/>
    <property type="match status" value="1"/>
</dbReference>
<dbReference type="Pfam" id="PF21176">
    <property type="entry name" value="RecR_HhH"/>
    <property type="match status" value="1"/>
</dbReference>
<dbReference type="Pfam" id="PF02132">
    <property type="entry name" value="RecR_ZnF"/>
    <property type="match status" value="1"/>
</dbReference>
<dbReference type="Pfam" id="PF13662">
    <property type="entry name" value="Toprim_4"/>
    <property type="match status" value="1"/>
</dbReference>
<dbReference type="SMART" id="SM00493">
    <property type="entry name" value="TOPRIM"/>
    <property type="match status" value="1"/>
</dbReference>
<dbReference type="SUPFAM" id="SSF111304">
    <property type="entry name" value="Recombination protein RecR"/>
    <property type="match status" value="1"/>
</dbReference>
<dbReference type="PROSITE" id="PS01300">
    <property type="entry name" value="RECR"/>
    <property type="match status" value="1"/>
</dbReference>
<dbReference type="PROSITE" id="PS50880">
    <property type="entry name" value="TOPRIM"/>
    <property type="match status" value="1"/>
</dbReference>
<proteinExistence type="inferred from homology"/>
<gene>
    <name evidence="1" type="primary">recR</name>
    <name type="ordered locus">SCH_0527</name>
</gene>
<keyword id="KW-0227">DNA damage</keyword>
<keyword id="KW-0233">DNA recombination</keyword>
<keyword id="KW-0234">DNA repair</keyword>
<keyword id="KW-0479">Metal-binding</keyword>
<keyword id="KW-0862">Zinc</keyword>
<keyword id="KW-0863">Zinc-finger</keyword>
<organism>
    <name type="scientific">Salmonella choleraesuis (strain SC-B67)</name>
    <dbReference type="NCBI Taxonomy" id="321314"/>
    <lineage>
        <taxon>Bacteria</taxon>
        <taxon>Pseudomonadati</taxon>
        <taxon>Pseudomonadota</taxon>
        <taxon>Gammaproteobacteria</taxon>
        <taxon>Enterobacterales</taxon>
        <taxon>Enterobacteriaceae</taxon>
        <taxon>Salmonella</taxon>
    </lineage>
</organism>